<protein>
    <recommendedName>
        <fullName evidence="2">Large ribosomal subunit protein bL31B</fullName>
    </recommendedName>
    <alternativeName>
        <fullName evidence="3">50S ribosomal protein L31 type B</fullName>
    </alternativeName>
</protein>
<gene>
    <name evidence="2" type="primary">rpmE2</name>
    <name type="ordered locus">Tcr_0125</name>
</gene>
<comment type="function">
    <text evidence="1">Binds the 23S rRNA.</text>
</comment>
<comment type="subunit">
    <text evidence="2">Part of the 50S ribosomal subunit.</text>
</comment>
<comment type="similarity">
    <text evidence="2">Belongs to the bacterial ribosomal protein bL31 family. Type B subfamily.</text>
</comment>
<dbReference type="EMBL" id="CP000109">
    <property type="protein sequence ID" value="ABB40721.1"/>
    <property type="molecule type" value="Genomic_DNA"/>
</dbReference>
<dbReference type="SMR" id="Q31JF2"/>
<dbReference type="STRING" id="317025.Tcr_0125"/>
<dbReference type="KEGG" id="tcx:Tcr_0125"/>
<dbReference type="eggNOG" id="COG0254">
    <property type="taxonomic scope" value="Bacteria"/>
</dbReference>
<dbReference type="HOGENOM" id="CLU_114306_2_2_6"/>
<dbReference type="OrthoDB" id="9803251at2"/>
<dbReference type="GO" id="GO:1990904">
    <property type="term" value="C:ribonucleoprotein complex"/>
    <property type="evidence" value="ECO:0007669"/>
    <property type="project" value="UniProtKB-KW"/>
</dbReference>
<dbReference type="GO" id="GO:0005840">
    <property type="term" value="C:ribosome"/>
    <property type="evidence" value="ECO:0007669"/>
    <property type="project" value="UniProtKB-KW"/>
</dbReference>
<dbReference type="GO" id="GO:0003735">
    <property type="term" value="F:structural constituent of ribosome"/>
    <property type="evidence" value="ECO:0007669"/>
    <property type="project" value="InterPro"/>
</dbReference>
<dbReference type="GO" id="GO:0006412">
    <property type="term" value="P:translation"/>
    <property type="evidence" value="ECO:0007669"/>
    <property type="project" value="UniProtKB-UniRule"/>
</dbReference>
<dbReference type="Gene3D" id="4.10.830.30">
    <property type="entry name" value="Ribosomal protein L31"/>
    <property type="match status" value="1"/>
</dbReference>
<dbReference type="HAMAP" id="MF_00502">
    <property type="entry name" value="Ribosomal_bL31_2"/>
    <property type="match status" value="1"/>
</dbReference>
<dbReference type="InterPro" id="IPR034704">
    <property type="entry name" value="Ribosomal_bL28/bL31-like_sf"/>
</dbReference>
<dbReference type="InterPro" id="IPR002150">
    <property type="entry name" value="Ribosomal_bL31"/>
</dbReference>
<dbReference type="InterPro" id="IPR027493">
    <property type="entry name" value="Ribosomal_bL31_B"/>
</dbReference>
<dbReference type="InterPro" id="IPR042105">
    <property type="entry name" value="Ribosomal_bL31_sf"/>
</dbReference>
<dbReference type="NCBIfam" id="TIGR00105">
    <property type="entry name" value="L31"/>
    <property type="match status" value="1"/>
</dbReference>
<dbReference type="NCBIfam" id="NF002462">
    <property type="entry name" value="PRK01678.1"/>
    <property type="match status" value="1"/>
</dbReference>
<dbReference type="PANTHER" id="PTHR33280">
    <property type="entry name" value="50S RIBOSOMAL PROTEIN L31, CHLOROPLASTIC"/>
    <property type="match status" value="1"/>
</dbReference>
<dbReference type="PANTHER" id="PTHR33280:SF1">
    <property type="entry name" value="LARGE RIBOSOMAL SUBUNIT PROTEIN BL31C"/>
    <property type="match status" value="1"/>
</dbReference>
<dbReference type="Pfam" id="PF01197">
    <property type="entry name" value="Ribosomal_L31"/>
    <property type="match status" value="1"/>
</dbReference>
<dbReference type="PRINTS" id="PR01249">
    <property type="entry name" value="RIBOSOMALL31"/>
</dbReference>
<dbReference type="SUPFAM" id="SSF143800">
    <property type="entry name" value="L28p-like"/>
    <property type="match status" value="1"/>
</dbReference>
<dbReference type="PROSITE" id="PS01143">
    <property type="entry name" value="RIBOSOMAL_L31"/>
    <property type="match status" value="1"/>
</dbReference>
<keyword id="KW-0687">Ribonucleoprotein</keyword>
<keyword id="KW-0689">Ribosomal protein</keyword>
<organism>
    <name type="scientific">Hydrogenovibrio crunogenus (strain DSM 25203 / XCL-2)</name>
    <name type="common">Thiomicrospira crunogena</name>
    <dbReference type="NCBI Taxonomy" id="317025"/>
    <lineage>
        <taxon>Bacteria</taxon>
        <taxon>Pseudomonadati</taxon>
        <taxon>Pseudomonadota</taxon>
        <taxon>Gammaproteobacteria</taxon>
        <taxon>Thiotrichales</taxon>
        <taxon>Piscirickettsiaceae</taxon>
        <taxon>Hydrogenovibrio</taxon>
    </lineage>
</organism>
<sequence>MQAGIHPEYNEVVFQDISTGETFLTRSTIEKTSGDTITLDGKEYPLVRIEVSSASHPFFTGKQSLVDTEGRVEKFRQKYGMRK</sequence>
<feature type="chain" id="PRO_0000259131" description="Large ribosomal subunit protein bL31B">
    <location>
        <begin position="1"/>
        <end position="83"/>
    </location>
</feature>
<proteinExistence type="inferred from homology"/>
<name>RL31B_HYDCU</name>
<accession>Q31JF2</accession>
<reference key="1">
    <citation type="journal article" date="2006" name="PLoS Biol.">
        <title>The genome of deep-sea vent chemolithoautotroph Thiomicrospira crunogena XCL-2.</title>
        <authorList>
            <person name="Scott K.M."/>
            <person name="Sievert S.M."/>
            <person name="Abril F.N."/>
            <person name="Ball L.A."/>
            <person name="Barrett C.J."/>
            <person name="Blake R.A."/>
            <person name="Boller A.J."/>
            <person name="Chain P.S.G."/>
            <person name="Clark J.A."/>
            <person name="Davis C.R."/>
            <person name="Detter C."/>
            <person name="Do K.F."/>
            <person name="Dobrinski K.P."/>
            <person name="Faza B.I."/>
            <person name="Fitzpatrick K.A."/>
            <person name="Freyermuth S.K."/>
            <person name="Harmer T.L."/>
            <person name="Hauser L.J."/>
            <person name="Huegler M."/>
            <person name="Kerfeld C.A."/>
            <person name="Klotz M.G."/>
            <person name="Kong W.W."/>
            <person name="Land M."/>
            <person name="Lapidus A."/>
            <person name="Larimer F.W."/>
            <person name="Longo D.L."/>
            <person name="Lucas S."/>
            <person name="Malfatti S.A."/>
            <person name="Massey S.E."/>
            <person name="Martin D.D."/>
            <person name="McCuddin Z."/>
            <person name="Meyer F."/>
            <person name="Moore J.L."/>
            <person name="Ocampo L.H. Jr."/>
            <person name="Paul J.H."/>
            <person name="Paulsen I.T."/>
            <person name="Reep D.K."/>
            <person name="Ren Q."/>
            <person name="Ross R.L."/>
            <person name="Sato P.Y."/>
            <person name="Thomas P."/>
            <person name="Tinkham L.E."/>
            <person name="Zeruth G.T."/>
        </authorList>
    </citation>
    <scope>NUCLEOTIDE SEQUENCE [LARGE SCALE GENOMIC DNA]</scope>
    <source>
        <strain>DSM 25203 / XCL-2</strain>
    </source>
</reference>
<evidence type="ECO:0000250" key="1"/>
<evidence type="ECO:0000255" key="2">
    <source>
        <dbReference type="HAMAP-Rule" id="MF_00502"/>
    </source>
</evidence>
<evidence type="ECO:0000305" key="3"/>